<evidence type="ECO:0000255" key="1">
    <source>
        <dbReference type="HAMAP-Rule" id="MF_01342"/>
    </source>
</evidence>
<evidence type="ECO:0000305" key="2"/>
<feature type="chain" id="PRO_0000062259" description="Large ribosomal subunit protein uL16">
    <location>
        <begin position="1"/>
        <end position="137"/>
    </location>
</feature>
<reference key="1">
    <citation type="journal article" date="2003" name="J. Bacteriol.">
        <title>Comparative analyses of the complete genome sequences of Pierce's disease and citrus variegated chlorosis strains of Xylella fastidiosa.</title>
        <authorList>
            <person name="Van Sluys M.A."/>
            <person name="de Oliveira M.C."/>
            <person name="Monteiro-Vitorello C.B."/>
            <person name="Miyaki C.Y."/>
            <person name="Furlan L.R."/>
            <person name="Camargo L.E.A."/>
            <person name="da Silva A.C.R."/>
            <person name="Moon D.H."/>
            <person name="Takita M.A."/>
            <person name="Lemos E.G.M."/>
            <person name="Machado M.A."/>
            <person name="Ferro M.I.T."/>
            <person name="da Silva F.R."/>
            <person name="Goldman M.H.S."/>
            <person name="Goldman G.H."/>
            <person name="Lemos M.V.F."/>
            <person name="El-Dorry H."/>
            <person name="Tsai S.M."/>
            <person name="Carrer H."/>
            <person name="Carraro D.M."/>
            <person name="de Oliveira R.C."/>
            <person name="Nunes L.R."/>
            <person name="Siqueira W.J."/>
            <person name="Coutinho L.L."/>
            <person name="Kimura E.T."/>
            <person name="Ferro E.S."/>
            <person name="Harakava R."/>
            <person name="Kuramae E.E."/>
            <person name="Marino C.L."/>
            <person name="Giglioti E."/>
            <person name="Abreu I.L."/>
            <person name="Alves L.M.C."/>
            <person name="do Amaral A.M."/>
            <person name="Baia G.S."/>
            <person name="Blanco S.R."/>
            <person name="Brito M.S."/>
            <person name="Cannavan F.S."/>
            <person name="Celestino A.V."/>
            <person name="da Cunha A.F."/>
            <person name="Fenille R.C."/>
            <person name="Ferro J.A."/>
            <person name="Formighieri E.F."/>
            <person name="Kishi L.T."/>
            <person name="Leoni S.G."/>
            <person name="Oliveira A.R."/>
            <person name="Rosa V.E. Jr."/>
            <person name="Sassaki F.T."/>
            <person name="Sena J.A.D."/>
            <person name="de Souza A.A."/>
            <person name="Truffi D."/>
            <person name="Tsukumo F."/>
            <person name="Yanai G.M."/>
            <person name="Zaros L.G."/>
            <person name="Civerolo E.L."/>
            <person name="Simpson A.J.G."/>
            <person name="Almeida N.F. Jr."/>
            <person name="Setubal J.C."/>
            <person name="Kitajima J.P."/>
        </authorList>
    </citation>
    <scope>NUCLEOTIDE SEQUENCE [LARGE SCALE GENOMIC DNA]</scope>
    <source>
        <strain>Temecula1 / ATCC 700964</strain>
    </source>
</reference>
<name>RL16_XYLFT</name>
<protein>
    <recommendedName>
        <fullName evidence="1">Large ribosomal subunit protein uL16</fullName>
    </recommendedName>
    <alternativeName>
        <fullName evidence="2">50S ribosomal protein L16</fullName>
    </alternativeName>
</protein>
<comment type="function">
    <text evidence="1">Binds 23S rRNA and is also seen to make contacts with the A and possibly P site tRNAs.</text>
</comment>
<comment type="subunit">
    <text evidence="1">Part of the 50S ribosomal subunit.</text>
</comment>
<comment type="similarity">
    <text evidence="1">Belongs to the universal ribosomal protein uL16 family.</text>
</comment>
<proteinExistence type="inferred from homology"/>
<accession>Q87E75</accession>
<organism>
    <name type="scientific">Xylella fastidiosa (strain Temecula1 / ATCC 700964)</name>
    <dbReference type="NCBI Taxonomy" id="183190"/>
    <lineage>
        <taxon>Bacteria</taxon>
        <taxon>Pseudomonadati</taxon>
        <taxon>Pseudomonadota</taxon>
        <taxon>Gammaproteobacteria</taxon>
        <taxon>Lysobacterales</taxon>
        <taxon>Lysobacteraceae</taxon>
        <taxon>Xylella</taxon>
    </lineage>
</organism>
<keyword id="KW-1185">Reference proteome</keyword>
<keyword id="KW-0687">Ribonucleoprotein</keyword>
<keyword id="KW-0689">Ribosomal protein</keyword>
<keyword id="KW-0694">RNA-binding</keyword>
<keyword id="KW-0699">rRNA-binding</keyword>
<keyword id="KW-0820">tRNA-binding</keyword>
<gene>
    <name evidence="1" type="primary">rplP</name>
    <name type="ordered locus">PD_0444</name>
</gene>
<dbReference type="EMBL" id="AE009442">
    <property type="protein sequence ID" value="AAO28323.1"/>
    <property type="molecule type" value="Genomic_DNA"/>
</dbReference>
<dbReference type="RefSeq" id="WP_004086531.1">
    <property type="nucleotide sequence ID" value="NC_004556.1"/>
</dbReference>
<dbReference type="SMR" id="Q87E75"/>
<dbReference type="GeneID" id="93904146"/>
<dbReference type="KEGG" id="xft:PD_0444"/>
<dbReference type="HOGENOM" id="CLU_078858_2_1_6"/>
<dbReference type="Proteomes" id="UP000002516">
    <property type="component" value="Chromosome"/>
</dbReference>
<dbReference type="GO" id="GO:0022625">
    <property type="term" value="C:cytosolic large ribosomal subunit"/>
    <property type="evidence" value="ECO:0007669"/>
    <property type="project" value="TreeGrafter"/>
</dbReference>
<dbReference type="GO" id="GO:0019843">
    <property type="term" value="F:rRNA binding"/>
    <property type="evidence" value="ECO:0007669"/>
    <property type="project" value="UniProtKB-UniRule"/>
</dbReference>
<dbReference type="GO" id="GO:0003735">
    <property type="term" value="F:structural constituent of ribosome"/>
    <property type="evidence" value="ECO:0007669"/>
    <property type="project" value="InterPro"/>
</dbReference>
<dbReference type="GO" id="GO:0000049">
    <property type="term" value="F:tRNA binding"/>
    <property type="evidence" value="ECO:0007669"/>
    <property type="project" value="UniProtKB-KW"/>
</dbReference>
<dbReference type="GO" id="GO:0006412">
    <property type="term" value="P:translation"/>
    <property type="evidence" value="ECO:0007669"/>
    <property type="project" value="UniProtKB-UniRule"/>
</dbReference>
<dbReference type="CDD" id="cd01433">
    <property type="entry name" value="Ribosomal_L16_L10e"/>
    <property type="match status" value="1"/>
</dbReference>
<dbReference type="FunFam" id="3.90.1170.10:FF:000001">
    <property type="entry name" value="50S ribosomal protein L16"/>
    <property type="match status" value="1"/>
</dbReference>
<dbReference type="Gene3D" id="3.90.1170.10">
    <property type="entry name" value="Ribosomal protein L10e/L16"/>
    <property type="match status" value="1"/>
</dbReference>
<dbReference type="HAMAP" id="MF_01342">
    <property type="entry name" value="Ribosomal_uL16"/>
    <property type="match status" value="1"/>
</dbReference>
<dbReference type="InterPro" id="IPR047873">
    <property type="entry name" value="Ribosomal_uL16"/>
</dbReference>
<dbReference type="InterPro" id="IPR000114">
    <property type="entry name" value="Ribosomal_uL16_bact-type"/>
</dbReference>
<dbReference type="InterPro" id="IPR020798">
    <property type="entry name" value="Ribosomal_uL16_CS"/>
</dbReference>
<dbReference type="InterPro" id="IPR016180">
    <property type="entry name" value="Ribosomal_uL16_dom"/>
</dbReference>
<dbReference type="InterPro" id="IPR036920">
    <property type="entry name" value="Ribosomal_uL16_sf"/>
</dbReference>
<dbReference type="NCBIfam" id="TIGR01164">
    <property type="entry name" value="rplP_bact"/>
    <property type="match status" value="1"/>
</dbReference>
<dbReference type="PANTHER" id="PTHR12220">
    <property type="entry name" value="50S/60S RIBOSOMAL PROTEIN L16"/>
    <property type="match status" value="1"/>
</dbReference>
<dbReference type="PANTHER" id="PTHR12220:SF13">
    <property type="entry name" value="LARGE RIBOSOMAL SUBUNIT PROTEIN UL16M"/>
    <property type="match status" value="1"/>
</dbReference>
<dbReference type="Pfam" id="PF00252">
    <property type="entry name" value="Ribosomal_L16"/>
    <property type="match status" value="1"/>
</dbReference>
<dbReference type="PRINTS" id="PR00060">
    <property type="entry name" value="RIBOSOMALL16"/>
</dbReference>
<dbReference type="SUPFAM" id="SSF54686">
    <property type="entry name" value="Ribosomal protein L16p/L10e"/>
    <property type="match status" value="1"/>
</dbReference>
<dbReference type="PROSITE" id="PS00701">
    <property type="entry name" value="RIBOSOMAL_L16_2"/>
    <property type="match status" value="1"/>
</dbReference>
<sequence length="137" mass="15492">MLQPKRTKYRKMHKGRNCGLSWNANVVSFGQYGLRATAHGQLTARQIEAARRSISRYVKRGGKLLIRVFPDKPITKKPIEVRMGSGKGNVEYWVAQIQPGRMIYEIEGVSEDVAREAFRLAASKLSVTTAFVVRTVR</sequence>